<sequence length="1939" mass="223173">MSSDQEMAIFGEAAPYLRKSEKERIEAQNKPFDAKTSVFVAEPKESFVKGTVQSREGGKVTVKTEAGATLTVKEDQVFPMNPPKFDKIEDMAMMTHLHEPAVLYNLKERYAAWMIYTYSGLFCVTVNPYKWLPVYNAEVVTAYRGKKRQEAPPHIFSISDNAYQFMLTDRENQSILITGESGAGKTVNTKRVIQYFATIAVTGEKKKEEPTSGKMQGTLEDQIISANPLLEAFGNAKTVRNDNSSRFGKFIRIHFGTTGKLASADIETYLLEKSRVTFQLKAERSYHIFYQIMSNKKPELIEMLLITTNPYDYAFVSQGEITVPSIDDQEELMATDSAIEILGFTSDERVSIYKLTGAVMHYGNLKFKQKQREEQAEPDGTEVADKAAYLQGLNSADLLKALCYPRVKVGNEFVTKGQTVQQVYNAVGALAKAVYDKMFLWMVTRINQQLDTKQPRQYFIGVLDIAGFEIFDFNSLEQLCINFTNEKLQQFFNHHMFVLEQEEYKKEGIEWEFIDFGMDLAACIELIEKPMGIFSILEEECMFPKATDTSFKNKLYEQHLGKSNNFQKPKPAKGKVEAHFSLIHYAGTVDYNITGWLDKNKDPLNETVVGLYQKSSVKTLAFLFTGAAGADAEAGGGKKGGKKKGSSFQTVSALFRENLNKLMTNLRSTHPHFVRCIIPNETKTPGAMEHELVLHQLRCNGVLEGIRICRKGFPSRILYADFKQRYKVLNASAIPEGQFIDSKKASEKLLGSIDIDHTQYKFGHTKVFFKAGLLGLLEEMRDEKLAQLITRTQARCRGFLARVEYQKMVERRESIFCIQYNIRAFMNVKHWPWMKLYFKIKPLLKSAETEKEMANMKEEFEKTKESLAKAEAKRKELEEKMVALMQEKNDLQLQVQAEADSLADAEERCDQLIKTKIQLEAKIKEVTERAEDEEEINAELTAKKRKLEDECSELKKDIDDLELTLAKVEKEKHATENKVKNLTEEMAGLDETIAKLTKEKKALQEAHQQTLDDLQAEEDKVNTLTKAKTKLEQQVDDLEGSLEQEKKLRMDLERAKRKLEGDLKLAQESTMDIENDKQQLDEKLKKKEFEMSNLQSKIEDEQALAMQLQKKIKELQARIEELEEEIEAERASRAKAEKQRSDLSRELEEISERLEEAGGATSAQIEMNKKREAEFQKMRRDLEEATLQHEATAATLRKKHADSVAELGEQIDNLQRVKQKLEKEKSEMKMEIDDLASNMETVSKAKGNLEKMCRTLEDQLSELKTKEEEQQRLINDLTAQRARLQTESGEYSRQLDEKDTLVSQLSRGKQAFTQQIEELKRQLEEEIKAKSALAHAVQSSRHDCDLLREQYEEEQEAKAELQRAMSKANSEVAQWRTKYETDAIQRTEELEEAKKKLAQRLQDAEEHVEAVNAKCASLEKTKQRLQNEVEDLMIDVERSNAACAALDKKQRNFDKILAEWKQKYEETHAELEASQKESRSLSTELFKVKNAYEESLDQLETLKRENKNLQQEISDLTEQIAEGGKRIHELEKIKKQVEQEKSEIQAALEEAEASLEHEEGKILRIQLELNQVKSEVDRKIAEKDEEIDQLKRNHVRVVESMQSMLDAEIRSRNDAIRLKKKMEGDLNEMEIQLNHANRMAAEALRNYRNTQGILKDTQIHLDDALRSQEDLKEQLAMVERRANLLQAEIEELRATLEQTERSRKVAEQELLDASERVQLLHTQNTSLINTKKKLETDISQIQGEMEDIIQEARNAEEKAKKAITDAAMMAEELKKEQDTSAHLERMKKNLEQTVKDLQHRLDEAEQLALKGGKKQIQKLEARVRELEGEVESEQKRNVETVKGLRKHERRVKELTYQTEEDRKNILRLQDLVDKLQAKVKSYKRQAEEAEEQSNVNLSKFRKLQHELEEAEERADIAESQVNKLRVKSREVHTKIISEE</sequence>
<reference key="1">
    <citation type="journal article" date="2001" name="Meat Sci.">
        <title>Differences in molecular structure among the porcine myosin heavy chain-2a, -2x, and -2b isoforms.</title>
        <authorList>
            <person name="Chikuni K."/>
            <person name="Tanabe R."/>
            <person name="Muroya S."/>
            <person name="Nakajima I."/>
        </authorList>
        <dbReference type="AGRICOLA" id="IND22089526"/>
    </citation>
    <scope>NUCLEOTIDE SEQUENCE [MRNA]</scope>
    <source>
        <strain>Landrace</strain>
        <tissue>Skeletal muscle</tissue>
    </source>
</reference>
<protein>
    <recommendedName>
        <fullName>Myosin-1</fullName>
    </recommendedName>
    <alternativeName>
        <fullName>Myosin heavy chain 1</fullName>
    </alternativeName>
    <alternativeName>
        <fullName>Myosin heavy chain 2x</fullName>
        <shortName>MyHC-2x</shortName>
    </alternativeName>
    <alternativeName>
        <fullName>Myosin heavy chain, skeletal muscle, adult 1</fullName>
    </alternativeName>
</protein>
<gene>
    <name type="primary">MYH1</name>
</gene>
<accession>Q9TV61</accession>
<dbReference type="EMBL" id="AB025262">
    <property type="protein sequence ID" value="BAA82146.1"/>
    <property type="molecule type" value="mRNA"/>
</dbReference>
<dbReference type="RefSeq" id="NP_001098421.1">
    <property type="nucleotide sequence ID" value="NM_001104951.2"/>
</dbReference>
<dbReference type="SMR" id="Q9TV61"/>
<dbReference type="FunCoup" id="Q9TV61">
    <property type="interactions" value="2"/>
</dbReference>
<dbReference type="PeptideAtlas" id="Q9TV61"/>
<dbReference type="GeneID" id="100125538"/>
<dbReference type="KEGG" id="ssc:100125538"/>
<dbReference type="CTD" id="4619"/>
<dbReference type="InParanoid" id="Q9TV61"/>
<dbReference type="OrthoDB" id="312459at2759"/>
<dbReference type="Proteomes" id="UP000008227">
    <property type="component" value="Unplaced"/>
</dbReference>
<dbReference type="Proteomes" id="UP000314985">
    <property type="component" value="Unplaced"/>
</dbReference>
<dbReference type="Proteomes" id="UP000694570">
    <property type="component" value="Unplaced"/>
</dbReference>
<dbReference type="Proteomes" id="UP000694571">
    <property type="component" value="Unplaced"/>
</dbReference>
<dbReference type="Proteomes" id="UP000694720">
    <property type="component" value="Unplaced"/>
</dbReference>
<dbReference type="Proteomes" id="UP000694722">
    <property type="component" value="Unplaced"/>
</dbReference>
<dbReference type="Proteomes" id="UP000694723">
    <property type="component" value="Unplaced"/>
</dbReference>
<dbReference type="Proteomes" id="UP000694724">
    <property type="component" value="Unplaced"/>
</dbReference>
<dbReference type="Proteomes" id="UP000694725">
    <property type="component" value="Unplaced"/>
</dbReference>
<dbReference type="Proteomes" id="UP000694726">
    <property type="component" value="Unplaced"/>
</dbReference>
<dbReference type="Proteomes" id="UP000694727">
    <property type="component" value="Unplaced"/>
</dbReference>
<dbReference type="Proteomes" id="UP000694728">
    <property type="component" value="Unplaced"/>
</dbReference>
<dbReference type="GO" id="GO:0005737">
    <property type="term" value="C:cytoplasm"/>
    <property type="evidence" value="ECO:0000318"/>
    <property type="project" value="GO_Central"/>
</dbReference>
<dbReference type="GO" id="GO:0030016">
    <property type="term" value="C:myofibril"/>
    <property type="evidence" value="ECO:0007669"/>
    <property type="project" value="UniProtKB-SubCell"/>
</dbReference>
<dbReference type="GO" id="GO:0032982">
    <property type="term" value="C:myosin filament"/>
    <property type="evidence" value="ECO:0000318"/>
    <property type="project" value="GO_Central"/>
</dbReference>
<dbReference type="GO" id="GO:0016460">
    <property type="term" value="C:myosin II complex"/>
    <property type="evidence" value="ECO:0000318"/>
    <property type="project" value="GO_Central"/>
</dbReference>
<dbReference type="GO" id="GO:0051015">
    <property type="term" value="F:actin filament binding"/>
    <property type="evidence" value="ECO:0000318"/>
    <property type="project" value="GO_Central"/>
</dbReference>
<dbReference type="GO" id="GO:0005524">
    <property type="term" value="F:ATP binding"/>
    <property type="evidence" value="ECO:0007669"/>
    <property type="project" value="UniProtKB-KW"/>
</dbReference>
<dbReference type="GO" id="GO:0005516">
    <property type="term" value="F:calmodulin binding"/>
    <property type="evidence" value="ECO:0007669"/>
    <property type="project" value="UniProtKB-KW"/>
</dbReference>
<dbReference type="GO" id="GO:0000146">
    <property type="term" value="F:microfilament motor activity"/>
    <property type="evidence" value="ECO:0000318"/>
    <property type="project" value="GO_Central"/>
</dbReference>
<dbReference type="GO" id="GO:0006936">
    <property type="term" value="P:muscle contraction"/>
    <property type="evidence" value="ECO:0000318"/>
    <property type="project" value="GO_Central"/>
</dbReference>
<dbReference type="CDD" id="cd14910">
    <property type="entry name" value="MYSc_Myh1_mammals"/>
    <property type="match status" value="1"/>
</dbReference>
<dbReference type="FunFam" id="1.10.10.820:FF:000001">
    <property type="entry name" value="Myosin heavy chain"/>
    <property type="match status" value="1"/>
</dbReference>
<dbReference type="FunFam" id="1.20.5.340:FF:000002">
    <property type="entry name" value="Myosin heavy chain"/>
    <property type="match status" value="1"/>
</dbReference>
<dbReference type="FunFam" id="1.20.5.340:FF:000003">
    <property type="entry name" value="Myosin heavy chain"/>
    <property type="match status" value="1"/>
</dbReference>
<dbReference type="FunFam" id="1.20.5.340:FF:000004">
    <property type="entry name" value="Myosin heavy chain"/>
    <property type="match status" value="1"/>
</dbReference>
<dbReference type="FunFam" id="1.20.5.340:FF:000006">
    <property type="entry name" value="Myosin heavy chain"/>
    <property type="match status" value="1"/>
</dbReference>
<dbReference type="FunFam" id="1.20.5.340:FF:000013">
    <property type="entry name" value="Myosin heavy chain"/>
    <property type="match status" value="1"/>
</dbReference>
<dbReference type="FunFam" id="1.20.5.370:FF:000001">
    <property type="entry name" value="Myosin heavy chain"/>
    <property type="match status" value="1"/>
</dbReference>
<dbReference type="FunFam" id="1.20.5.370:FF:000002">
    <property type="entry name" value="Myosin heavy chain"/>
    <property type="match status" value="1"/>
</dbReference>
<dbReference type="FunFam" id="1.20.5.370:FF:000003">
    <property type="entry name" value="Myosin heavy chain"/>
    <property type="match status" value="1"/>
</dbReference>
<dbReference type="FunFam" id="1.20.5.370:FF:000007">
    <property type="entry name" value="Myosin heavy chain"/>
    <property type="match status" value="1"/>
</dbReference>
<dbReference type="FunFam" id="1.20.5.370:FF:000008">
    <property type="entry name" value="Myosin heavy chain"/>
    <property type="match status" value="1"/>
</dbReference>
<dbReference type="FunFam" id="1.20.5.4820:FF:000001">
    <property type="entry name" value="Myosin heavy chain"/>
    <property type="match status" value="1"/>
</dbReference>
<dbReference type="FunFam" id="1.20.58.530:FF:000001">
    <property type="entry name" value="Myosin heavy chain"/>
    <property type="match status" value="1"/>
</dbReference>
<dbReference type="FunFam" id="2.30.30.360:FF:000001">
    <property type="entry name" value="Myosin heavy chain"/>
    <property type="match status" value="1"/>
</dbReference>
<dbReference type="FunFam" id="3.40.850.10:FF:000024">
    <property type="entry name" value="Myosin heavy chain, isoform J"/>
    <property type="match status" value="1"/>
</dbReference>
<dbReference type="FunFam" id="1.20.120.720:FF:000001">
    <property type="entry name" value="Myosin heavy chain, muscle"/>
    <property type="match status" value="1"/>
</dbReference>
<dbReference type="Gene3D" id="1.10.10.820">
    <property type="match status" value="1"/>
</dbReference>
<dbReference type="Gene3D" id="1.20.5.340">
    <property type="match status" value="5"/>
</dbReference>
<dbReference type="Gene3D" id="1.20.5.370">
    <property type="match status" value="4"/>
</dbReference>
<dbReference type="Gene3D" id="1.20.5.4820">
    <property type="match status" value="1"/>
</dbReference>
<dbReference type="Gene3D" id="1.20.58.530">
    <property type="match status" value="1"/>
</dbReference>
<dbReference type="Gene3D" id="6.10.250.2420">
    <property type="match status" value="1"/>
</dbReference>
<dbReference type="Gene3D" id="3.40.850.10">
    <property type="entry name" value="Kinesin motor domain"/>
    <property type="match status" value="1"/>
</dbReference>
<dbReference type="Gene3D" id="2.30.30.360">
    <property type="entry name" value="Myosin S1 fragment, N-terminal"/>
    <property type="match status" value="1"/>
</dbReference>
<dbReference type="Gene3D" id="1.20.120.720">
    <property type="entry name" value="Myosin VI head, motor domain, U50 subdomain"/>
    <property type="match status" value="1"/>
</dbReference>
<dbReference type="InterPro" id="IPR000048">
    <property type="entry name" value="IQ_motif_EF-hand-BS"/>
</dbReference>
<dbReference type="InterPro" id="IPR036961">
    <property type="entry name" value="Kinesin_motor_dom_sf"/>
</dbReference>
<dbReference type="InterPro" id="IPR001609">
    <property type="entry name" value="Myosin_head_motor_dom-like"/>
</dbReference>
<dbReference type="InterPro" id="IPR004009">
    <property type="entry name" value="Myosin_N"/>
</dbReference>
<dbReference type="InterPro" id="IPR008989">
    <property type="entry name" value="Myosin_S1_N"/>
</dbReference>
<dbReference type="InterPro" id="IPR002928">
    <property type="entry name" value="Myosin_tail"/>
</dbReference>
<dbReference type="InterPro" id="IPR027417">
    <property type="entry name" value="P-loop_NTPase"/>
</dbReference>
<dbReference type="InterPro" id="IPR014751">
    <property type="entry name" value="XRCC4-like_C"/>
</dbReference>
<dbReference type="PANTHER" id="PTHR45615">
    <property type="entry name" value="MYOSIN HEAVY CHAIN, NON-MUSCLE"/>
    <property type="match status" value="1"/>
</dbReference>
<dbReference type="PANTHER" id="PTHR45615:SF2">
    <property type="entry name" value="MYOSIN-1"/>
    <property type="match status" value="1"/>
</dbReference>
<dbReference type="Pfam" id="PF00063">
    <property type="entry name" value="Myosin_head"/>
    <property type="match status" value="1"/>
</dbReference>
<dbReference type="Pfam" id="PF02736">
    <property type="entry name" value="Myosin_N"/>
    <property type="match status" value="1"/>
</dbReference>
<dbReference type="Pfam" id="PF01576">
    <property type="entry name" value="Myosin_tail_1"/>
    <property type="match status" value="1"/>
</dbReference>
<dbReference type="PRINTS" id="PR00193">
    <property type="entry name" value="MYOSINHEAVY"/>
</dbReference>
<dbReference type="SMART" id="SM00015">
    <property type="entry name" value="IQ"/>
    <property type="match status" value="2"/>
</dbReference>
<dbReference type="SMART" id="SM00242">
    <property type="entry name" value="MYSc"/>
    <property type="match status" value="1"/>
</dbReference>
<dbReference type="SUPFAM" id="SSF90257">
    <property type="entry name" value="Myosin rod fragments"/>
    <property type="match status" value="5"/>
</dbReference>
<dbReference type="SUPFAM" id="SSF52540">
    <property type="entry name" value="P-loop containing nucleoside triphosphate hydrolases"/>
    <property type="match status" value="1"/>
</dbReference>
<dbReference type="SUPFAM" id="SSF57997">
    <property type="entry name" value="Tropomyosin"/>
    <property type="match status" value="1"/>
</dbReference>
<dbReference type="PROSITE" id="PS50096">
    <property type="entry name" value="IQ"/>
    <property type="match status" value="1"/>
</dbReference>
<dbReference type="PROSITE" id="PS51456">
    <property type="entry name" value="MYOSIN_MOTOR"/>
    <property type="match status" value="1"/>
</dbReference>
<dbReference type="PROSITE" id="PS51844">
    <property type="entry name" value="SH3_LIKE"/>
    <property type="match status" value="1"/>
</dbReference>
<organism>
    <name type="scientific">Sus scrofa</name>
    <name type="common">Pig</name>
    <dbReference type="NCBI Taxonomy" id="9823"/>
    <lineage>
        <taxon>Eukaryota</taxon>
        <taxon>Metazoa</taxon>
        <taxon>Chordata</taxon>
        <taxon>Craniata</taxon>
        <taxon>Vertebrata</taxon>
        <taxon>Euteleostomi</taxon>
        <taxon>Mammalia</taxon>
        <taxon>Eutheria</taxon>
        <taxon>Laurasiatheria</taxon>
        <taxon>Artiodactyla</taxon>
        <taxon>Suina</taxon>
        <taxon>Suidae</taxon>
        <taxon>Sus</taxon>
    </lineage>
</organism>
<comment type="function">
    <text evidence="5">Required for normal hearing. It plays a role in cochlear amplification of auditory stimuli, likely through the positive regulation of prestin (SLC26A5) activity and outer hair cell (OHC) electromotility.</text>
</comment>
<comment type="subunit">
    <text evidence="2">Muscle myosin is a hexameric protein that consists of 2 heavy chain subunits (MHC), 2 alkali light chain subunits (MLC) and 2 regulatory light chain subunits (MLC-2). Interacts with SLC26A5.</text>
</comment>
<comment type="subcellular location">
    <subcellularLocation>
        <location evidence="1">Cytoplasm</location>
        <location evidence="1">Myofibril</location>
    </subcellularLocation>
    <text evidence="1">Thick filaments of the myofibrils.</text>
</comment>
<comment type="domain">
    <text>The rodlike tail sequence is highly repetitive, showing cycles of a 28-residue repeat pattern composed of 4 heptapeptides, characteristic for alpha-helical coiled coils.</text>
</comment>
<comment type="domain">
    <text evidence="11">Limited proteolysis of myosin heavy chain produces 1 light meromyosin (LMM) and 1 heavy meromyosin (HMM). HMM can be further cleaved into 2 globular subfragments (S1) and 1 rod-shaped subfragment (S2).</text>
</comment>
<comment type="similarity">
    <text evidence="11">Belongs to the TRAFAC class myosin-kinesin ATPase superfamily. Myosin family.</text>
</comment>
<comment type="caution">
    <text evidence="11">Represents a conventional myosin. This protein should not be confused with the unconventional myosin-1 (MYO1).</text>
</comment>
<evidence type="ECO:0000250" key="1"/>
<evidence type="ECO:0000250" key="2">
    <source>
        <dbReference type="UniProtKB" id="P12882"/>
    </source>
</evidence>
<evidence type="ECO:0000250" key="3">
    <source>
        <dbReference type="UniProtKB" id="Q28641"/>
    </source>
</evidence>
<evidence type="ECO:0000250" key="4">
    <source>
        <dbReference type="UniProtKB" id="Q29RW1"/>
    </source>
</evidence>
<evidence type="ECO:0000250" key="5">
    <source>
        <dbReference type="UniProtKB" id="Q5SX40"/>
    </source>
</evidence>
<evidence type="ECO:0000255" key="6"/>
<evidence type="ECO:0000255" key="7">
    <source>
        <dbReference type="PROSITE-ProRule" id="PRU00116"/>
    </source>
</evidence>
<evidence type="ECO:0000255" key="8">
    <source>
        <dbReference type="PROSITE-ProRule" id="PRU00782"/>
    </source>
</evidence>
<evidence type="ECO:0000255" key="9">
    <source>
        <dbReference type="PROSITE-ProRule" id="PRU01190"/>
    </source>
</evidence>
<evidence type="ECO:0000256" key="10">
    <source>
        <dbReference type="SAM" id="MobiDB-lite"/>
    </source>
</evidence>
<evidence type="ECO:0000305" key="11"/>
<keyword id="KW-0009">Actin-binding</keyword>
<keyword id="KW-0067">ATP-binding</keyword>
<keyword id="KW-0112">Calmodulin-binding</keyword>
<keyword id="KW-0175">Coiled coil</keyword>
<keyword id="KW-0963">Cytoplasm</keyword>
<keyword id="KW-1009">Hearing</keyword>
<keyword id="KW-0488">Methylation</keyword>
<keyword id="KW-0505">Motor protein</keyword>
<keyword id="KW-0514">Muscle protein</keyword>
<keyword id="KW-0518">Myosin</keyword>
<keyword id="KW-0547">Nucleotide-binding</keyword>
<keyword id="KW-0597">Phosphoprotein</keyword>
<keyword id="KW-1185">Reference proteome</keyword>
<keyword id="KW-0787">Thick filament</keyword>
<proteinExistence type="evidence at transcript level"/>
<feature type="chain" id="PRO_0000274164" description="Myosin-1">
    <location>
        <begin position="1"/>
        <end position="1939"/>
    </location>
</feature>
<feature type="domain" description="Myosin N-terminal SH3-like" evidence="9">
    <location>
        <begin position="33"/>
        <end position="82"/>
    </location>
</feature>
<feature type="domain" description="Myosin motor" evidence="8">
    <location>
        <begin position="86"/>
        <end position="782"/>
    </location>
</feature>
<feature type="domain" description="IQ" evidence="7">
    <location>
        <begin position="785"/>
        <end position="814"/>
    </location>
</feature>
<feature type="region of interest" description="Actin-binding" evidence="1">
    <location>
        <begin position="659"/>
        <end position="681"/>
    </location>
</feature>
<feature type="region of interest" description="Actin-binding" evidence="1">
    <location>
        <begin position="761"/>
        <end position="775"/>
    </location>
</feature>
<feature type="region of interest" description="Disordered" evidence="10">
    <location>
        <begin position="1125"/>
        <end position="1147"/>
    </location>
</feature>
<feature type="region of interest" description="Disordered" evidence="10">
    <location>
        <begin position="1153"/>
        <end position="1172"/>
    </location>
</feature>
<feature type="coiled-coil region" evidence="6">
    <location>
        <begin position="843"/>
        <end position="1939"/>
    </location>
</feature>
<feature type="compositionally biased region" description="Basic and acidic residues" evidence="10">
    <location>
        <begin position="1128"/>
        <end position="1147"/>
    </location>
</feature>
<feature type="binding site" evidence="6">
    <location>
        <begin position="179"/>
        <end position="186"/>
    </location>
    <ligand>
        <name>ATP</name>
        <dbReference type="ChEBI" id="CHEBI:30616"/>
    </ligand>
</feature>
<feature type="modified residue" description="Phosphothreonine" evidence="4">
    <location>
        <position position="64"/>
    </location>
</feature>
<feature type="modified residue" description="Phosphothreonine" evidence="4">
    <location>
        <position position="69"/>
    </location>
</feature>
<feature type="modified residue" description="N6,N6,N6-trimethyllysine" evidence="6">
    <location>
        <position position="130"/>
    </location>
</feature>
<feature type="modified residue" description="Phosphotyrosine" evidence="4">
    <location>
        <position position="389"/>
    </location>
</feature>
<feature type="modified residue" description="Phosphothreonine" evidence="4">
    <location>
        <position position="419"/>
    </location>
</feature>
<feature type="modified residue" description="Phosphotyrosine" evidence="4">
    <location>
        <position position="424"/>
    </location>
</feature>
<feature type="modified residue" description="Pros-methylhistidine" evidence="3">
    <location>
        <position position="757"/>
    </location>
</feature>
<feature type="modified residue" description="Phosphoserine" evidence="4">
    <location>
        <position position="1092"/>
    </location>
</feature>
<feature type="modified residue" description="Phosphoserine" evidence="4">
    <location>
        <position position="1096"/>
    </location>
</feature>
<feature type="modified residue" description="Phosphoserine" evidence="4">
    <location>
        <position position="1162"/>
    </location>
</feature>
<feature type="modified residue" description="Phosphoserine" evidence="4">
    <location>
        <position position="1237"/>
    </location>
</feature>
<feature type="modified residue" description="Phosphothreonine" evidence="4">
    <location>
        <position position="1241"/>
    </location>
</feature>
<feature type="modified residue" description="Phosphoserine" evidence="4">
    <location>
        <position position="1243"/>
    </location>
</feature>
<feature type="modified residue" description="Phosphothreonine" evidence="4">
    <location>
        <position position="1255"/>
    </location>
</feature>
<feature type="modified residue" description="Phosphoserine" evidence="4">
    <location>
        <position position="1261"/>
    </location>
</feature>
<feature type="modified residue" description="Phosphothreonine" evidence="4">
    <location>
        <position position="1265"/>
    </location>
</feature>
<feature type="modified residue" description="Phosphothreonine" evidence="4">
    <location>
        <position position="1286"/>
    </location>
</feature>
<feature type="modified residue" description="Phosphoserine" evidence="4">
    <location>
        <position position="1288"/>
    </location>
</feature>
<feature type="modified residue" description="Phosphoserine" evidence="4">
    <location>
        <position position="1292"/>
    </location>
</feature>
<feature type="modified residue" description="Phosphoserine" evidence="4">
    <location>
        <position position="1303"/>
    </location>
</feature>
<feature type="modified residue" description="Phosphoserine" evidence="4">
    <location>
        <position position="1306"/>
    </location>
</feature>
<feature type="modified residue" description="Phosphotyrosine" evidence="4">
    <location>
        <position position="1464"/>
    </location>
</feature>
<feature type="modified residue" description="Phosphothreonine" evidence="4">
    <location>
        <position position="1467"/>
    </location>
</feature>
<feature type="modified residue" description="Phosphoserine" evidence="4">
    <location>
        <position position="1474"/>
    </location>
</feature>
<feature type="modified residue" description="Phosphotyrosine" evidence="4">
    <location>
        <position position="1492"/>
    </location>
</feature>
<feature type="modified residue" description="Phosphoserine" evidence="4">
    <location>
        <position position="1495"/>
    </location>
</feature>
<feature type="modified residue" description="Phosphothreonine" evidence="4">
    <location>
        <position position="1501"/>
    </location>
</feature>
<feature type="modified residue" description="Phosphoserine" evidence="4">
    <location>
        <position position="1514"/>
    </location>
</feature>
<feature type="modified residue" description="Phosphothreonine" evidence="4">
    <location>
        <position position="1517"/>
    </location>
</feature>
<feature type="modified residue" description="Phosphoserine" evidence="4">
    <location>
        <position position="1542"/>
    </location>
</feature>
<feature type="modified residue" description="Phosphoserine" evidence="4">
    <location>
        <position position="1554"/>
    </location>
</feature>
<feature type="modified residue" description="Phosphoserine" evidence="4">
    <location>
        <position position="1574"/>
    </location>
</feature>
<feature type="modified residue" description="Phosphoserine" evidence="4">
    <location>
        <position position="1600"/>
    </location>
</feature>
<feature type="modified residue" description="Phosphoserine" evidence="4">
    <location>
        <position position="1603"/>
    </location>
</feature>
<feature type="modified residue" description="Phosphoserine" evidence="4">
    <location>
        <position position="1714"/>
    </location>
</feature>
<feature type="modified residue" description="Phosphoserine" evidence="4">
    <location>
        <position position="1726"/>
    </location>
</feature>
<feature type="modified residue" description="Phosphothreonine" evidence="4">
    <location>
        <position position="1730"/>
    </location>
</feature>
<feature type="modified residue" description="Phosphothreonine" evidence="4">
    <location>
        <position position="1736"/>
    </location>
</feature>
<feature type="modified residue" description="Phosphoserine" evidence="4">
    <location>
        <position position="1739"/>
    </location>
</feature>
<name>MYH1_PIG</name>